<evidence type="ECO:0000250" key="1"/>
<evidence type="ECO:0000255" key="2">
    <source>
        <dbReference type="PROSITE-ProRule" id="PRU10014"/>
    </source>
</evidence>
<evidence type="ECO:0000269" key="3">
    <source>
    </source>
</evidence>
<evidence type="ECO:0000305" key="4"/>
<accession>P36603</accession>
<accession>O74355</accession>
<keyword id="KW-0963">Cytoplasm</keyword>
<keyword id="KW-0215">Deoxyribonucleotide synthesis</keyword>
<keyword id="KW-0408">Iron</keyword>
<keyword id="KW-0479">Metal-binding</keyword>
<keyword id="KW-0539">Nucleus</keyword>
<keyword id="KW-0560">Oxidoreductase</keyword>
<keyword id="KW-1185">Reference proteome</keyword>
<dbReference type="EC" id="1.17.4.1"/>
<dbReference type="EMBL" id="X65115">
    <property type="protein sequence ID" value="CAA46231.1"/>
    <property type="molecule type" value="Genomic_DNA"/>
</dbReference>
<dbReference type="EMBL" id="CU329671">
    <property type="protein sequence ID" value="CAA20100.1"/>
    <property type="molecule type" value="Genomic_DNA"/>
</dbReference>
<dbReference type="PIR" id="S34808">
    <property type="entry name" value="S34808"/>
</dbReference>
<dbReference type="PIR" id="T39992">
    <property type="entry name" value="T39992"/>
</dbReference>
<dbReference type="RefSeq" id="NP_596546.1">
    <property type="nucleotide sequence ID" value="NM_001022467.2"/>
</dbReference>
<dbReference type="SMR" id="P36603"/>
<dbReference type="BioGRID" id="276910">
    <property type="interactions" value="9"/>
</dbReference>
<dbReference type="FunCoup" id="P36603">
    <property type="interactions" value="276"/>
</dbReference>
<dbReference type="STRING" id="284812.P36603"/>
<dbReference type="iPTMnet" id="P36603"/>
<dbReference type="SwissPalm" id="P36603"/>
<dbReference type="PaxDb" id="4896-SPBC25D12.04.1"/>
<dbReference type="EnsemblFungi" id="SPBC25D12.04.1">
    <property type="protein sequence ID" value="SPBC25D12.04.1:pep"/>
    <property type="gene ID" value="SPBC25D12.04"/>
</dbReference>
<dbReference type="GeneID" id="2540381"/>
<dbReference type="KEGG" id="spo:2540381"/>
<dbReference type="PomBase" id="SPBC25D12.04">
    <property type="gene designation" value="suc22"/>
</dbReference>
<dbReference type="VEuPathDB" id="FungiDB:SPBC25D12.04"/>
<dbReference type="eggNOG" id="KOG1567">
    <property type="taxonomic scope" value="Eukaryota"/>
</dbReference>
<dbReference type="HOGENOM" id="CLU_035339_2_1_1"/>
<dbReference type="InParanoid" id="P36603"/>
<dbReference type="OMA" id="SNPFPWM"/>
<dbReference type="PhylomeDB" id="P36603"/>
<dbReference type="Reactome" id="R-SPO-499943">
    <property type="pathway name" value="Interconversion of nucleotide di- and triphosphates"/>
</dbReference>
<dbReference type="PRO" id="PR:P36603"/>
<dbReference type="Proteomes" id="UP000002485">
    <property type="component" value="Chromosome II"/>
</dbReference>
<dbReference type="GO" id="GO:0005737">
    <property type="term" value="C:cytoplasm"/>
    <property type="evidence" value="ECO:0000314"/>
    <property type="project" value="PomBase"/>
</dbReference>
<dbReference type="GO" id="GO:0005829">
    <property type="term" value="C:cytosol"/>
    <property type="evidence" value="ECO:0007005"/>
    <property type="project" value="PomBase"/>
</dbReference>
<dbReference type="GO" id="GO:0005634">
    <property type="term" value="C:nucleus"/>
    <property type="evidence" value="ECO:0000314"/>
    <property type="project" value="PomBase"/>
</dbReference>
<dbReference type="GO" id="GO:0005971">
    <property type="term" value="C:ribonucleoside-diphosphate reductase complex"/>
    <property type="evidence" value="ECO:0000353"/>
    <property type="project" value="PomBase"/>
</dbReference>
<dbReference type="GO" id="GO:0046872">
    <property type="term" value="F:metal ion binding"/>
    <property type="evidence" value="ECO:0007669"/>
    <property type="project" value="UniProtKB-KW"/>
</dbReference>
<dbReference type="GO" id="GO:0004748">
    <property type="term" value="F:ribonucleoside-diphosphate reductase activity, thioredoxin disulfide as acceptor"/>
    <property type="evidence" value="ECO:0007669"/>
    <property type="project" value="UniProtKB-EC"/>
</dbReference>
<dbReference type="GO" id="GO:0046704">
    <property type="term" value="P:CDP metabolic process"/>
    <property type="evidence" value="ECO:0000314"/>
    <property type="project" value="PomBase"/>
</dbReference>
<dbReference type="GO" id="GO:0006240">
    <property type="term" value="P:dCDP biosynthetic process"/>
    <property type="evidence" value="ECO:0000314"/>
    <property type="project" value="PomBase"/>
</dbReference>
<dbReference type="GO" id="GO:0009216">
    <property type="term" value="P:purine deoxyribonucleoside triphosphate biosynthetic process"/>
    <property type="evidence" value="ECO:0000305"/>
    <property type="project" value="PomBase"/>
</dbReference>
<dbReference type="GO" id="GO:0042278">
    <property type="term" value="P:purine nucleoside metabolic process"/>
    <property type="evidence" value="ECO:0000305"/>
    <property type="project" value="PomBase"/>
</dbReference>
<dbReference type="GO" id="GO:0009212">
    <property type="term" value="P:pyrimidine deoxyribonucleoside triphosphate biosynthetic process"/>
    <property type="evidence" value="ECO:0000305"/>
    <property type="project" value="PomBase"/>
</dbReference>
<dbReference type="GO" id="GO:0006213">
    <property type="term" value="P:pyrimidine nucleoside metabolic process"/>
    <property type="evidence" value="ECO:0000305"/>
    <property type="project" value="PomBase"/>
</dbReference>
<dbReference type="CDD" id="cd01049">
    <property type="entry name" value="RNRR2"/>
    <property type="match status" value="1"/>
</dbReference>
<dbReference type="Gene3D" id="1.10.620.20">
    <property type="entry name" value="Ribonucleotide Reductase, subunit A"/>
    <property type="match status" value="1"/>
</dbReference>
<dbReference type="InterPro" id="IPR009078">
    <property type="entry name" value="Ferritin-like_SF"/>
</dbReference>
<dbReference type="InterPro" id="IPR012348">
    <property type="entry name" value="RNR-like"/>
</dbReference>
<dbReference type="InterPro" id="IPR033909">
    <property type="entry name" value="RNR_small"/>
</dbReference>
<dbReference type="InterPro" id="IPR030475">
    <property type="entry name" value="RNR_small_AS"/>
</dbReference>
<dbReference type="InterPro" id="IPR000358">
    <property type="entry name" value="RNR_small_fam"/>
</dbReference>
<dbReference type="PANTHER" id="PTHR23409">
    <property type="entry name" value="RIBONUCLEOSIDE-DIPHOSPHATE REDUCTASE SMALL CHAIN"/>
    <property type="match status" value="1"/>
</dbReference>
<dbReference type="PANTHER" id="PTHR23409:SF18">
    <property type="entry name" value="RIBONUCLEOSIDE-DIPHOSPHATE REDUCTASE SUBUNIT M2"/>
    <property type="match status" value="1"/>
</dbReference>
<dbReference type="Pfam" id="PF00268">
    <property type="entry name" value="Ribonuc_red_sm"/>
    <property type="match status" value="1"/>
</dbReference>
<dbReference type="SUPFAM" id="SSF47240">
    <property type="entry name" value="Ferritin-like"/>
    <property type="match status" value="1"/>
</dbReference>
<dbReference type="PROSITE" id="PS00368">
    <property type="entry name" value="RIBORED_SMALL"/>
    <property type="match status" value="1"/>
</dbReference>
<sequence length="391" mass="45405">MGLEHLEEFSYPKEHGEEVEYDSEQGVRKIYVKSIKETFNFDNVSEEEKQEGGDYYLGKKEDELDEVVLRPNPHRFVLFPIKYHEIWQFYKKAEASFWTAEEIDLSKDLVDWDNKLNADERYFISTVLAYFAASDGIVNENLLERFSSEVQIPEARCVYGFQIMIENIHSETYSLLLDTYIREPKEKQRHFDAILTMGSIKAKAKWALRWINDEDSTYAIRLVAFAAVEGIFFSGSFASIFWLKKRGLMPGLTFSNELICRDEGLHTDFACLMFSHLKHRPGRKVVEAIIVEAVDIEKEYFTDALPVSLLGMNKDLMCQYIEFVADRLLVALGNDKYYNVTNPFDFMENISLAGKTNFFEKKVSDYQIAGVMSGTKRAEKDDHTFTIDEDF</sequence>
<comment type="function">
    <text>Provides the precursors necessary for DNA synthesis. Catalyzes the biosynthesis of deoxyribonucleotides from the corresponding ribonucleotides.</text>
</comment>
<comment type="catalytic activity">
    <reaction evidence="2">
        <text>a 2'-deoxyribonucleoside 5'-diphosphate + [thioredoxin]-disulfide + H2O = a ribonucleoside 5'-diphosphate + [thioredoxin]-dithiol</text>
        <dbReference type="Rhea" id="RHEA:23252"/>
        <dbReference type="Rhea" id="RHEA-COMP:10698"/>
        <dbReference type="Rhea" id="RHEA-COMP:10700"/>
        <dbReference type="ChEBI" id="CHEBI:15377"/>
        <dbReference type="ChEBI" id="CHEBI:29950"/>
        <dbReference type="ChEBI" id="CHEBI:50058"/>
        <dbReference type="ChEBI" id="CHEBI:57930"/>
        <dbReference type="ChEBI" id="CHEBI:73316"/>
        <dbReference type="EC" id="1.17.4.1"/>
    </reaction>
</comment>
<comment type="cofactor">
    <cofactor evidence="1">
        <name>Fe cation</name>
        <dbReference type="ChEBI" id="CHEBI:24875"/>
    </cofactor>
    <text evidence="1">Binds 2 iron ions per subunit.</text>
</comment>
<comment type="subunit">
    <text>Heterodimer of a large and a small subunit.</text>
</comment>
<comment type="subcellular location">
    <subcellularLocation>
        <location evidence="3">Nucleus</location>
    </subcellularLocation>
    <subcellularLocation>
        <location evidence="3">Cytoplasm</location>
    </subcellularLocation>
    <text>Localization to the cytoplasm is CSN- and checkpoint-dependent and is required for an efficient DNA damage response.</text>
</comment>
<comment type="similarity">
    <text evidence="4">Belongs to the ribonucleoside diphosphate reductase small chain family.</text>
</comment>
<name>RIR2_SCHPO</name>
<proteinExistence type="inferred from homology"/>
<protein>
    <recommendedName>
        <fullName>Ribonucleoside-diphosphate reductase small chain</fullName>
        <ecNumber>1.17.4.1</ecNumber>
    </recommendedName>
    <alternativeName>
        <fullName>Ribonucleotide reductase small subunit</fullName>
    </alternativeName>
</protein>
<gene>
    <name type="primary">suc22</name>
    <name type="ORF">SPBC25D12.04</name>
</gene>
<organism>
    <name type="scientific">Schizosaccharomyces pombe (strain 972 / ATCC 24843)</name>
    <name type="common">Fission yeast</name>
    <dbReference type="NCBI Taxonomy" id="284812"/>
    <lineage>
        <taxon>Eukaryota</taxon>
        <taxon>Fungi</taxon>
        <taxon>Dikarya</taxon>
        <taxon>Ascomycota</taxon>
        <taxon>Taphrinomycotina</taxon>
        <taxon>Schizosaccharomycetes</taxon>
        <taxon>Schizosaccharomycetales</taxon>
        <taxon>Schizosaccharomycetaceae</taxon>
        <taxon>Schizosaccharomyces</taxon>
    </lineage>
</organism>
<feature type="chain" id="PRO_0000190463" description="Ribonucleoside-diphosphate reductase small chain">
    <location>
        <begin position="1"/>
        <end position="391"/>
    </location>
</feature>
<feature type="active site" evidence="2">
    <location>
        <position position="173"/>
    </location>
</feature>
<feature type="binding site" evidence="2">
    <location>
        <position position="135"/>
    </location>
    <ligand>
        <name>Fe cation</name>
        <dbReference type="ChEBI" id="CHEBI:24875"/>
        <label>1</label>
    </ligand>
</feature>
<feature type="binding site" evidence="2">
    <location>
        <position position="166"/>
    </location>
    <ligand>
        <name>Fe cation</name>
        <dbReference type="ChEBI" id="CHEBI:24875"/>
        <label>1</label>
    </ligand>
</feature>
<feature type="binding site" evidence="1">
    <location>
        <position position="166"/>
    </location>
    <ligand>
        <name>Fe cation</name>
        <dbReference type="ChEBI" id="CHEBI:24875"/>
        <label>2</label>
    </ligand>
</feature>
<feature type="binding site" evidence="2">
    <location>
        <position position="169"/>
    </location>
    <ligand>
        <name>Fe cation</name>
        <dbReference type="ChEBI" id="CHEBI:24875"/>
        <label>1</label>
    </ligand>
</feature>
<feature type="binding site" evidence="1">
    <location>
        <position position="229"/>
    </location>
    <ligand>
        <name>Fe cation</name>
        <dbReference type="ChEBI" id="CHEBI:24875"/>
        <label>2</label>
    </ligand>
</feature>
<feature type="binding site" evidence="1">
    <location>
        <position position="263"/>
    </location>
    <ligand>
        <name>Fe cation</name>
        <dbReference type="ChEBI" id="CHEBI:24875"/>
        <label>2</label>
    </ligand>
</feature>
<feature type="binding site" evidence="1">
    <location>
        <position position="266"/>
    </location>
    <ligand>
        <name>Fe cation</name>
        <dbReference type="ChEBI" id="CHEBI:24875"/>
        <label>2</label>
    </ligand>
</feature>
<feature type="sequence conflict" description="In Ref. 1; CAA46231." evidence="4" ref="1">
    <original>VVEA</original>
    <variation>LLKP</variation>
    <location>
        <begin position="285"/>
        <end position="288"/>
    </location>
</feature>
<reference key="1">
    <citation type="journal article" date="1993" name="Mol. Gen. Genet.">
        <title>The cell cycle genes cdc22+ and suc22+ of the fission yeast Schizosaccharomyces pombe encode the large and small subunits of ribonucleotide reductase.</title>
        <authorList>
            <person name="Fernandez-Sarabia M.J."/>
            <person name="McInerny C."/>
            <person name="Harris P."/>
            <person name="Gordon C."/>
            <person name="Fantes P."/>
        </authorList>
    </citation>
    <scope>NUCLEOTIDE SEQUENCE [GENOMIC DNA]</scope>
    <source>
        <strain>972 / ATCC 24843</strain>
    </source>
</reference>
<reference key="2">
    <citation type="journal article" date="2002" name="Nature">
        <title>The genome sequence of Schizosaccharomyces pombe.</title>
        <authorList>
            <person name="Wood V."/>
            <person name="Gwilliam R."/>
            <person name="Rajandream M.A."/>
            <person name="Lyne M.H."/>
            <person name="Lyne R."/>
            <person name="Stewart A."/>
            <person name="Sgouros J.G."/>
            <person name="Peat N."/>
            <person name="Hayles J."/>
            <person name="Baker S.G."/>
            <person name="Basham D."/>
            <person name="Bowman S."/>
            <person name="Brooks K."/>
            <person name="Brown D."/>
            <person name="Brown S."/>
            <person name="Chillingworth T."/>
            <person name="Churcher C.M."/>
            <person name="Collins M."/>
            <person name="Connor R."/>
            <person name="Cronin A."/>
            <person name="Davis P."/>
            <person name="Feltwell T."/>
            <person name="Fraser A."/>
            <person name="Gentles S."/>
            <person name="Goble A."/>
            <person name="Hamlin N."/>
            <person name="Harris D.E."/>
            <person name="Hidalgo J."/>
            <person name="Hodgson G."/>
            <person name="Holroyd S."/>
            <person name="Hornsby T."/>
            <person name="Howarth S."/>
            <person name="Huckle E.J."/>
            <person name="Hunt S."/>
            <person name="Jagels K."/>
            <person name="James K.D."/>
            <person name="Jones L."/>
            <person name="Jones M."/>
            <person name="Leather S."/>
            <person name="McDonald S."/>
            <person name="McLean J."/>
            <person name="Mooney P."/>
            <person name="Moule S."/>
            <person name="Mungall K.L."/>
            <person name="Murphy L.D."/>
            <person name="Niblett D."/>
            <person name="Odell C."/>
            <person name="Oliver K."/>
            <person name="O'Neil S."/>
            <person name="Pearson D."/>
            <person name="Quail M.A."/>
            <person name="Rabbinowitsch E."/>
            <person name="Rutherford K.M."/>
            <person name="Rutter S."/>
            <person name="Saunders D."/>
            <person name="Seeger K."/>
            <person name="Sharp S."/>
            <person name="Skelton J."/>
            <person name="Simmonds M.N."/>
            <person name="Squares R."/>
            <person name="Squares S."/>
            <person name="Stevens K."/>
            <person name="Taylor K."/>
            <person name="Taylor R.G."/>
            <person name="Tivey A."/>
            <person name="Walsh S.V."/>
            <person name="Warren T."/>
            <person name="Whitehead S."/>
            <person name="Woodward J.R."/>
            <person name="Volckaert G."/>
            <person name="Aert R."/>
            <person name="Robben J."/>
            <person name="Grymonprez B."/>
            <person name="Weltjens I."/>
            <person name="Vanstreels E."/>
            <person name="Rieger M."/>
            <person name="Schaefer M."/>
            <person name="Mueller-Auer S."/>
            <person name="Gabel C."/>
            <person name="Fuchs M."/>
            <person name="Duesterhoeft A."/>
            <person name="Fritzc C."/>
            <person name="Holzer E."/>
            <person name="Moestl D."/>
            <person name="Hilbert H."/>
            <person name="Borzym K."/>
            <person name="Langer I."/>
            <person name="Beck A."/>
            <person name="Lehrach H."/>
            <person name="Reinhardt R."/>
            <person name="Pohl T.M."/>
            <person name="Eger P."/>
            <person name="Zimmermann W."/>
            <person name="Wedler H."/>
            <person name="Wambutt R."/>
            <person name="Purnelle B."/>
            <person name="Goffeau A."/>
            <person name="Cadieu E."/>
            <person name="Dreano S."/>
            <person name="Gloux S."/>
            <person name="Lelaure V."/>
            <person name="Mottier S."/>
            <person name="Galibert F."/>
            <person name="Aves S.J."/>
            <person name="Xiang Z."/>
            <person name="Hunt C."/>
            <person name="Moore K."/>
            <person name="Hurst S.M."/>
            <person name="Lucas M."/>
            <person name="Rochet M."/>
            <person name="Gaillardin C."/>
            <person name="Tallada V.A."/>
            <person name="Garzon A."/>
            <person name="Thode G."/>
            <person name="Daga R.R."/>
            <person name="Cruzado L."/>
            <person name="Jimenez J."/>
            <person name="Sanchez M."/>
            <person name="del Rey F."/>
            <person name="Benito J."/>
            <person name="Dominguez A."/>
            <person name="Revuelta J.L."/>
            <person name="Moreno S."/>
            <person name="Armstrong J."/>
            <person name="Forsburg S.L."/>
            <person name="Cerutti L."/>
            <person name="Lowe T."/>
            <person name="McCombie W.R."/>
            <person name="Paulsen I."/>
            <person name="Potashkin J."/>
            <person name="Shpakovski G.V."/>
            <person name="Ussery D."/>
            <person name="Barrell B.G."/>
            <person name="Nurse P."/>
        </authorList>
    </citation>
    <scope>NUCLEOTIDE SEQUENCE [LARGE SCALE GENOMIC DNA]</scope>
    <source>
        <strain>972 / ATCC 24843</strain>
    </source>
</reference>
<reference key="3">
    <citation type="journal article" date="2003" name="Genes Dev.">
        <title>Cop9/signalosome subunits and Pcu4 regulate ribonucleotide reductase by both checkpoint-dependent and -independent mechanisms.</title>
        <authorList>
            <person name="Liu C."/>
            <person name="Powell K.A."/>
            <person name="Mundt K."/>
            <person name="Wu L."/>
            <person name="Carr A.M."/>
            <person name="Caspari T."/>
        </authorList>
    </citation>
    <scope>SUBCELLULAR LOCATION</scope>
</reference>